<dbReference type="EC" id="2.7.7.60" evidence="1"/>
<dbReference type="EMBL" id="AE017333">
    <property type="protein sequence ID" value="AAU39082.1"/>
    <property type="molecule type" value="Genomic_DNA"/>
</dbReference>
<dbReference type="EMBL" id="CP000002">
    <property type="protein sequence ID" value="AAU21738.1"/>
    <property type="molecule type" value="Genomic_DNA"/>
</dbReference>
<dbReference type="RefSeq" id="WP_009330349.1">
    <property type="nucleotide sequence ID" value="NC_006322.1"/>
</dbReference>
<dbReference type="SMR" id="Q65PD2"/>
<dbReference type="STRING" id="279010.BL03265"/>
<dbReference type="GeneID" id="92858928"/>
<dbReference type="KEGG" id="bld:BLi00108"/>
<dbReference type="KEGG" id="bli:BL03265"/>
<dbReference type="eggNOG" id="COG1211">
    <property type="taxonomic scope" value="Bacteria"/>
</dbReference>
<dbReference type="HOGENOM" id="CLU_061281_2_2_9"/>
<dbReference type="UniPathway" id="UPA00056">
    <property type="reaction ID" value="UER00093"/>
</dbReference>
<dbReference type="Proteomes" id="UP000000606">
    <property type="component" value="Chromosome"/>
</dbReference>
<dbReference type="GO" id="GO:0050518">
    <property type="term" value="F:2-C-methyl-D-erythritol 4-phosphate cytidylyltransferase activity"/>
    <property type="evidence" value="ECO:0007669"/>
    <property type="project" value="UniProtKB-UniRule"/>
</dbReference>
<dbReference type="GO" id="GO:0019288">
    <property type="term" value="P:isopentenyl diphosphate biosynthetic process, methylerythritol 4-phosphate pathway"/>
    <property type="evidence" value="ECO:0007669"/>
    <property type="project" value="UniProtKB-UniRule"/>
</dbReference>
<dbReference type="CDD" id="cd02516">
    <property type="entry name" value="CDP-ME_synthetase"/>
    <property type="match status" value="1"/>
</dbReference>
<dbReference type="FunFam" id="3.90.550.10:FF:000003">
    <property type="entry name" value="2-C-methyl-D-erythritol 4-phosphate cytidylyltransferase"/>
    <property type="match status" value="1"/>
</dbReference>
<dbReference type="Gene3D" id="3.90.550.10">
    <property type="entry name" value="Spore Coat Polysaccharide Biosynthesis Protein SpsA, Chain A"/>
    <property type="match status" value="1"/>
</dbReference>
<dbReference type="HAMAP" id="MF_00108">
    <property type="entry name" value="IspD"/>
    <property type="match status" value="1"/>
</dbReference>
<dbReference type="InterPro" id="IPR001228">
    <property type="entry name" value="IspD"/>
</dbReference>
<dbReference type="InterPro" id="IPR034683">
    <property type="entry name" value="IspD/TarI"/>
</dbReference>
<dbReference type="InterPro" id="IPR050088">
    <property type="entry name" value="IspD/TarI_cytidylyltransf_bact"/>
</dbReference>
<dbReference type="InterPro" id="IPR018294">
    <property type="entry name" value="ISPD_synthase_CS"/>
</dbReference>
<dbReference type="InterPro" id="IPR029044">
    <property type="entry name" value="Nucleotide-diphossugar_trans"/>
</dbReference>
<dbReference type="NCBIfam" id="TIGR00453">
    <property type="entry name" value="ispD"/>
    <property type="match status" value="1"/>
</dbReference>
<dbReference type="PANTHER" id="PTHR32125">
    <property type="entry name" value="2-C-METHYL-D-ERYTHRITOL 4-PHOSPHATE CYTIDYLYLTRANSFERASE, CHLOROPLASTIC"/>
    <property type="match status" value="1"/>
</dbReference>
<dbReference type="PANTHER" id="PTHR32125:SF4">
    <property type="entry name" value="2-C-METHYL-D-ERYTHRITOL 4-PHOSPHATE CYTIDYLYLTRANSFERASE, CHLOROPLASTIC"/>
    <property type="match status" value="1"/>
</dbReference>
<dbReference type="Pfam" id="PF01128">
    <property type="entry name" value="IspD"/>
    <property type="match status" value="1"/>
</dbReference>
<dbReference type="SUPFAM" id="SSF53448">
    <property type="entry name" value="Nucleotide-diphospho-sugar transferases"/>
    <property type="match status" value="1"/>
</dbReference>
<dbReference type="PROSITE" id="PS01295">
    <property type="entry name" value="ISPD"/>
    <property type="match status" value="1"/>
</dbReference>
<keyword id="KW-0414">Isoprene biosynthesis</keyword>
<keyword id="KW-0548">Nucleotidyltransferase</keyword>
<keyword id="KW-1185">Reference proteome</keyword>
<keyword id="KW-0808">Transferase</keyword>
<evidence type="ECO:0000255" key="1">
    <source>
        <dbReference type="HAMAP-Rule" id="MF_00108"/>
    </source>
</evidence>
<reference key="1">
    <citation type="journal article" date="2004" name="J. Mol. Microbiol. Biotechnol.">
        <title>The complete genome sequence of Bacillus licheniformis DSM13, an organism with great industrial potential.</title>
        <authorList>
            <person name="Veith B."/>
            <person name="Herzberg C."/>
            <person name="Steckel S."/>
            <person name="Feesche J."/>
            <person name="Maurer K.H."/>
            <person name="Ehrenreich P."/>
            <person name="Baeumer S."/>
            <person name="Henne A."/>
            <person name="Liesegang H."/>
            <person name="Merkl R."/>
            <person name="Ehrenreich A."/>
            <person name="Gottschalk G."/>
        </authorList>
    </citation>
    <scope>NUCLEOTIDE SEQUENCE [LARGE SCALE GENOMIC DNA]</scope>
    <source>
        <strain>ATCC 14580 / DSM 13 / JCM 2505 / CCUG 7422 / NBRC 12200 / NCIMB 9375 / NCTC 10341 / NRRL NRS-1264 / Gibson 46</strain>
    </source>
</reference>
<reference key="2">
    <citation type="journal article" date="2004" name="Genome Biol.">
        <title>Complete genome sequence of the industrial bacterium Bacillus licheniformis and comparisons with closely related Bacillus species.</title>
        <authorList>
            <person name="Rey M.W."/>
            <person name="Ramaiya P."/>
            <person name="Nelson B.A."/>
            <person name="Brody-Karpin S.D."/>
            <person name="Zaretsky E.J."/>
            <person name="Tang M."/>
            <person name="Lopez de Leon A."/>
            <person name="Xiang H."/>
            <person name="Gusti V."/>
            <person name="Clausen I.G."/>
            <person name="Olsen P.B."/>
            <person name="Rasmussen M.D."/>
            <person name="Andersen J.T."/>
            <person name="Joergensen P.L."/>
            <person name="Larsen T.S."/>
            <person name="Sorokin A."/>
            <person name="Bolotin A."/>
            <person name="Lapidus A."/>
            <person name="Galleron N."/>
            <person name="Ehrlich S.D."/>
            <person name="Berka R.M."/>
        </authorList>
    </citation>
    <scope>NUCLEOTIDE SEQUENCE [LARGE SCALE GENOMIC DNA]</scope>
    <source>
        <strain>ATCC 14580 / DSM 13 / JCM 2505 / CCUG 7422 / NBRC 12200 / NCIMB 9375 / NCTC 10341 / NRRL NRS-1264 / Gibson 46</strain>
    </source>
</reference>
<accession>Q65PD2</accession>
<accession>Q62ZS0</accession>
<feature type="chain" id="PRO_0000237772" description="2-C-methyl-D-erythritol 4-phosphate cytidylyltransferase">
    <location>
        <begin position="1"/>
        <end position="231"/>
    </location>
</feature>
<feature type="site" description="Transition state stabilizer" evidence="1">
    <location>
        <position position="15"/>
    </location>
</feature>
<feature type="site" description="Transition state stabilizer" evidence="1">
    <location>
        <position position="22"/>
    </location>
</feature>
<feature type="site" description="Positions MEP for the nucleophilic attack" evidence="1">
    <location>
        <position position="152"/>
    </location>
</feature>
<feature type="site" description="Positions MEP for the nucleophilic attack" evidence="1">
    <location>
        <position position="208"/>
    </location>
</feature>
<organism>
    <name type="scientific">Bacillus licheniformis (strain ATCC 14580 / DSM 13 / JCM 2505 / CCUG 7422 / NBRC 12200 / NCIMB 9375 / NCTC 10341 / NRRL NRS-1264 / Gibson 46)</name>
    <dbReference type="NCBI Taxonomy" id="279010"/>
    <lineage>
        <taxon>Bacteria</taxon>
        <taxon>Bacillati</taxon>
        <taxon>Bacillota</taxon>
        <taxon>Bacilli</taxon>
        <taxon>Bacillales</taxon>
        <taxon>Bacillaceae</taxon>
        <taxon>Bacillus</taxon>
    </lineage>
</organism>
<name>ISPD_BACLD</name>
<sequence>MNYEVVIPAAGQGKRMNAGKNKLFIEAKGIPVIIHTLKVFENHDACKRIILVINEQEFGEFNTLLKTYHFKTPIEMVPGGRERQQSVFAGIKAAGKEETVLVHDGARPFIKREYIEQLVEKAKETGAAIVAVPVKDTIKRVQDGEIAGTIERSSLWAAQTPQAFRLSILMNAHLEAEAKGFLGTDDASLVEEAGGTVAIIQGDYQNIKLTTPDDLLVAEAILEAEKRNEHV</sequence>
<protein>
    <recommendedName>
        <fullName evidence="1">2-C-methyl-D-erythritol 4-phosphate cytidylyltransferase</fullName>
        <ecNumber evidence="1">2.7.7.60</ecNumber>
    </recommendedName>
    <alternativeName>
        <fullName evidence="1">4-diphosphocytidyl-2C-methyl-D-erythritol synthase</fullName>
    </alternativeName>
    <alternativeName>
        <fullName evidence="1">MEP cytidylyltransferase</fullName>
        <shortName evidence="1">MCT</shortName>
    </alternativeName>
</protein>
<gene>
    <name evidence="1" type="primary">ispD</name>
    <name type="ordered locus">BLi00108</name>
    <name type="ordered locus">BL03265</name>
</gene>
<comment type="function">
    <text evidence="1">Catalyzes the formation of 4-diphosphocytidyl-2-C-methyl-D-erythritol from CTP and 2-C-methyl-D-erythritol 4-phosphate (MEP).</text>
</comment>
<comment type="catalytic activity">
    <reaction evidence="1">
        <text>2-C-methyl-D-erythritol 4-phosphate + CTP + H(+) = 4-CDP-2-C-methyl-D-erythritol + diphosphate</text>
        <dbReference type="Rhea" id="RHEA:13429"/>
        <dbReference type="ChEBI" id="CHEBI:15378"/>
        <dbReference type="ChEBI" id="CHEBI:33019"/>
        <dbReference type="ChEBI" id="CHEBI:37563"/>
        <dbReference type="ChEBI" id="CHEBI:57823"/>
        <dbReference type="ChEBI" id="CHEBI:58262"/>
        <dbReference type="EC" id="2.7.7.60"/>
    </reaction>
</comment>
<comment type="pathway">
    <text evidence="1">Isoprenoid biosynthesis; isopentenyl diphosphate biosynthesis via DXP pathway; isopentenyl diphosphate from 1-deoxy-D-xylulose 5-phosphate: step 2/6.</text>
</comment>
<comment type="similarity">
    <text evidence="1">Belongs to the IspD/TarI cytidylyltransferase family. IspD subfamily.</text>
</comment>
<proteinExistence type="inferred from homology"/>